<reference key="1">
    <citation type="journal article" date="2000" name="Nucleic Acids Res.">
        <title>Complete genome sequence of the alkaliphilic bacterium Bacillus halodurans and genomic sequence comparison with Bacillus subtilis.</title>
        <authorList>
            <person name="Takami H."/>
            <person name="Nakasone K."/>
            <person name="Takaki Y."/>
            <person name="Maeno G."/>
            <person name="Sasaki R."/>
            <person name="Masui N."/>
            <person name="Fuji F."/>
            <person name="Hirama C."/>
            <person name="Nakamura Y."/>
            <person name="Ogasawara N."/>
            <person name="Kuhara S."/>
            <person name="Horikoshi K."/>
        </authorList>
    </citation>
    <scope>NUCLEOTIDE SEQUENCE [LARGE SCALE GENOMIC DNA]</scope>
    <source>
        <strain>ATCC BAA-125 / DSM 18197 / FERM 7344 / JCM 9153 / C-125</strain>
    </source>
</reference>
<dbReference type="EMBL" id="BA000004">
    <property type="protein sequence ID" value="BAB05093.1"/>
    <property type="molecule type" value="Genomic_DNA"/>
</dbReference>
<dbReference type="PIR" id="F83821">
    <property type="entry name" value="F83821"/>
</dbReference>
<dbReference type="RefSeq" id="WP_010897539.1">
    <property type="nucleotide sequence ID" value="NC_002570.2"/>
</dbReference>
<dbReference type="STRING" id="272558.gene:10727268"/>
<dbReference type="GeneID" id="87596994"/>
<dbReference type="KEGG" id="bha:BH1374"/>
<dbReference type="eggNOG" id="COG1671">
    <property type="taxonomic scope" value="Bacteria"/>
</dbReference>
<dbReference type="HOGENOM" id="CLU_106619_0_0_9"/>
<dbReference type="OrthoDB" id="9798918at2"/>
<dbReference type="Proteomes" id="UP000001258">
    <property type="component" value="Chromosome"/>
</dbReference>
<dbReference type="HAMAP" id="MF_00489">
    <property type="entry name" value="UPF0178"/>
    <property type="match status" value="1"/>
</dbReference>
<dbReference type="InterPro" id="IPR003791">
    <property type="entry name" value="UPF0178"/>
</dbReference>
<dbReference type="NCBIfam" id="NF001095">
    <property type="entry name" value="PRK00124.1"/>
    <property type="match status" value="1"/>
</dbReference>
<dbReference type="PANTHER" id="PTHR35146">
    <property type="entry name" value="UPF0178 PROTEIN YAII"/>
    <property type="match status" value="1"/>
</dbReference>
<dbReference type="PANTHER" id="PTHR35146:SF1">
    <property type="entry name" value="UPF0178 PROTEIN YAII"/>
    <property type="match status" value="1"/>
</dbReference>
<dbReference type="Pfam" id="PF02639">
    <property type="entry name" value="DUF188"/>
    <property type="match status" value="1"/>
</dbReference>
<evidence type="ECO:0000305" key="1"/>
<gene>
    <name type="ordered locus">BH1374</name>
</gene>
<accession>Q9KD45</accession>
<name>Y1374_HALH5</name>
<comment type="similarity">
    <text evidence="1">Belongs to the UPF0178 family.</text>
</comment>
<feature type="chain" id="PRO_0000175959" description="UPF0178 protein BH1374">
    <location>
        <begin position="1"/>
        <end position="157"/>
    </location>
</feature>
<sequence>MKNEDSTQIFEVFVDADSCPVKDEIELVAESYKVKVTFVSSYAHNMTVGPTSKVVMVDAEREAVDLYIANHIKKKDVCVTHDYGLASLLLTKGATVISPRGQMFDHTIIDSLLAQRHQSQKDRRAGKKTKGPRAYLKGDRERFIQQFEKILSNRAGI</sequence>
<keyword id="KW-1185">Reference proteome</keyword>
<proteinExistence type="inferred from homology"/>
<organism>
    <name type="scientific">Halalkalibacterium halodurans (strain ATCC BAA-125 / DSM 18197 / FERM 7344 / JCM 9153 / C-125)</name>
    <name type="common">Bacillus halodurans</name>
    <dbReference type="NCBI Taxonomy" id="272558"/>
    <lineage>
        <taxon>Bacteria</taxon>
        <taxon>Bacillati</taxon>
        <taxon>Bacillota</taxon>
        <taxon>Bacilli</taxon>
        <taxon>Bacillales</taxon>
        <taxon>Bacillaceae</taxon>
        <taxon>Halalkalibacterium (ex Joshi et al. 2022)</taxon>
    </lineage>
</organism>
<protein>
    <recommendedName>
        <fullName>UPF0178 protein BH1374</fullName>
    </recommendedName>
</protein>